<keyword id="KW-0472">Membrane</keyword>
<keyword id="KW-0496">Mitochondrion</keyword>
<keyword id="KW-1000">Mitochondrion outer membrane</keyword>
<keyword id="KW-0597">Phosphoprotein</keyword>
<keyword id="KW-0812">Transmembrane</keyword>
<keyword id="KW-1133">Transmembrane helix</keyword>
<dbReference type="EMBL" id="AAFW02000011">
    <property type="protein sequence ID" value="EDN64837.1"/>
    <property type="molecule type" value="Genomic_DNA"/>
</dbReference>
<dbReference type="HOGENOM" id="CLU_156741_0_0_1"/>
<dbReference type="Proteomes" id="UP000007060">
    <property type="component" value="Unassembled WGS sequence"/>
</dbReference>
<dbReference type="GO" id="GO:0005741">
    <property type="term" value="C:mitochondrial outer membrane"/>
    <property type="evidence" value="ECO:0007669"/>
    <property type="project" value="UniProtKB-SubCell"/>
</dbReference>
<dbReference type="GO" id="GO:1990593">
    <property type="term" value="F:nascent polypeptide-associated complex binding"/>
    <property type="evidence" value="ECO:0007669"/>
    <property type="project" value="InterPro"/>
</dbReference>
<dbReference type="GO" id="GO:0006626">
    <property type="term" value="P:protein targeting to mitochondrion"/>
    <property type="evidence" value="ECO:0007669"/>
    <property type="project" value="TreeGrafter"/>
</dbReference>
<dbReference type="InterPro" id="IPR039454">
    <property type="entry name" value="OM14"/>
</dbReference>
<dbReference type="InterPro" id="IPR039453">
    <property type="entry name" value="OM14_C"/>
</dbReference>
<dbReference type="PANTHER" id="PTHR38402">
    <property type="entry name" value="MITOCHONDRIAL OUTER MEMBRANE PROTEIN OM14"/>
    <property type="match status" value="1"/>
</dbReference>
<dbReference type="PANTHER" id="PTHR38402:SF1">
    <property type="entry name" value="MITOCHONDRIAL OUTER MEMBRANE PROTEIN OM14"/>
    <property type="match status" value="1"/>
</dbReference>
<dbReference type="Pfam" id="PF17304">
    <property type="entry name" value="OM14_C"/>
    <property type="match status" value="1"/>
</dbReference>
<sequence>MSATAKHDSNASPNSDSEDGHHHNNKKECAIEYLKARLNSASAVACGYLQAFVSKTQDFAKVCFLELQNPVVLVNLLLHSSVVCYLCNGYANHNARFLKGKPNSTVLATTAGALGLLTLDGIISKKYYSRYDKK</sequence>
<protein>
    <recommendedName>
        <fullName>Mitochondrial outer membrane protein OM14</fullName>
    </recommendedName>
    <alternativeName>
        <fullName>Outer membrane protein of 14 kDa</fullName>
    </alternativeName>
</protein>
<reference key="1">
    <citation type="journal article" date="2007" name="Proc. Natl. Acad. Sci. U.S.A.">
        <title>Genome sequencing and comparative analysis of Saccharomyces cerevisiae strain YJM789.</title>
        <authorList>
            <person name="Wei W."/>
            <person name="McCusker J.H."/>
            <person name="Hyman R.W."/>
            <person name="Jones T."/>
            <person name="Ning Y."/>
            <person name="Cao Z."/>
            <person name="Gu Z."/>
            <person name="Bruno D."/>
            <person name="Miranda M."/>
            <person name="Nguyen M."/>
            <person name="Wilhelmy J."/>
            <person name="Komp C."/>
            <person name="Tamse R."/>
            <person name="Wang X."/>
            <person name="Jia P."/>
            <person name="Luedi P."/>
            <person name="Oefner P.J."/>
            <person name="David L."/>
            <person name="Dietrich F.S."/>
            <person name="Li Y."/>
            <person name="Davis R.W."/>
            <person name="Steinmetz L.M."/>
        </authorList>
    </citation>
    <scope>NUCLEOTIDE SEQUENCE [LARGE SCALE GENOMIC DNA]</scope>
    <source>
        <strain>YJM789</strain>
    </source>
</reference>
<evidence type="ECO:0000250" key="1">
    <source>
        <dbReference type="UniProtKB" id="P38325"/>
    </source>
</evidence>
<evidence type="ECO:0000255" key="2"/>
<evidence type="ECO:0000256" key="3">
    <source>
        <dbReference type="SAM" id="MobiDB-lite"/>
    </source>
</evidence>
<accession>A6ZLG8</accession>
<comment type="subcellular location">
    <subcellularLocation>
        <location>Mitochondrion outer membrane</location>
        <topology>Multi-pass membrane protein</topology>
    </subcellularLocation>
</comment>
<proteinExistence type="inferred from homology"/>
<organism>
    <name type="scientific">Saccharomyces cerevisiae (strain YJM789)</name>
    <name type="common">Baker's yeast</name>
    <dbReference type="NCBI Taxonomy" id="307796"/>
    <lineage>
        <taxon>Eukaryota</taxon>
        <taxon>Fungi</taxon>
        <taxon>Dikarya</taxon>
        <taxon>Ascomycota</taxon>
        <taxon>Saccharomycotina</taxon>
        <taxon>Saccharomycetes</taxon>
        <taxon>Saccharomycetales</taxon>
        <taxon>Saccharomycetaceae</taxon>
        <taxon>Saccharomyces</taxon>
    </lineage>
</organism>
<name>OM14_YEAS7</name>
<feature type="chain" id="PRO_0000320431" description="Mitochondrial outer membrane protein OM14">
    <location>
        <begin position="1"/>
        <end position="134"/>
    </location>
</feature>
<feature type="transmembrane region" description="Helical" evidence="2">
    <location>
        <begin position="71"/>
        <end position="87"/>
    </location>
</feature>
<feature type="transmembrane region" description="Helical" evidence="2">
    <location>
        <begin position="105"/>
        <end position="123"/>
    </location>
</feature>
<feature type="region of interest" description="Disordered" evidence="3">
    <location>
        <begin position="1"/>
        <end position="23"/>
    </location>
</feature>
<feature type="modified residue" description="Phosphoserine" evidence="1">
    <location>
        <position position="12"/>
    </location>
</feature>
<feature type="modified residue" description="Phosphoserine" evidence="1">
    <location>
        <position position="15"/>
    </location>
</feature>
<gene>
    <name type="primary">OM14</name>
    <name type="ORF">SCY_0438</name>
</gene>